<dbReference type="EMBL" id="AF115436">
    <property type="protein sequence ID" value="AAD11436.1"/>
    <property type="molecule type" value="mRNA"/>
</dbReference>
<dbReference type="EMBL" id="AF278704">
    <property type="protein sequence ID" value="AAF91421.1"/>
    <property type="molecule type" value="Genomic_DNA"/>
</dbReference>
<dbReference type="EMBL" id="CR456582">
    <property type="protein sequence ID" value="CAG30468.1"/>
    <property type="molecule type" value="mRNA"/>
</dbReference>
<dbReference type="EMBL" id="BT007357">
    <property type="protein sequence ID" value="AAP36021.1"/>
    <property type="molecule type" value="mRNA"/>
</dbReference>
<dbReference type="EMBL" id="BC009715">
    <property type="protein sequence ID" value="AAH09715.1"/>
    <property type="molecule type" value="mRNA"/>
</dbReference>
<dbReference type="CCDS" id="CCDS13784.1"/>
<dbReference type="RefSeq" id="NP_004773.1">
    <property type="nucleotide sequence ID" value="NM_004782.4"/>
</dbReference>
<dbReference type="PDB" id="4WY4">
    <property type="method" value="X-ray"/>
    <property type="resolution" value="1.40 A"/>
    <property type="chains" value="C=39-116, D=194-258"/>
</dbReference>
<dbReference type="PDB" id="7BV6">
    <property type="method" value="X-ray"/>
    <property type="resolution" value="3.05 A"/>
    <property type="chains" value="C/G/K/O/S/W=40-130, D/H/L/P/T/X=191-258"/>
</dbReference>
<dbReference type="PDBsum" id="4WY4"/>
<dbReference type="PDBsum" id="7BV6"/>
<dbReference type="SMR" id="O95721"/>
<dbReference type="BioGRID" id="114748">
    <property type="interactions" value="271"/>
</dbReference>
<dbReference type="ComplexPortal" id="CPX-25782">
    <property type="entry name" value="SNARE complex STX17-SNAP29-VAMP8"/>
</dbReference>
<dbReference type="ComplexPortal" id="CPX-25783">
    <property type="entry name" value="SNARE complex STX17-SNAP29-VAMP7"/>
</dbReference>
<dbReference type="ComplexPortal" id="CPX-25786">
    <property type="entry name" value="SNARE priming complex STX17-SNAP29-YKT6"/>
</dbReference>
<dbReference type="CORUM" id="O95721"/>
<dbReference type="DIP" id="DIP-56475N"/>
<dbReference type="FunCoup" id="O95721">
    <property type="interactions" value="2252"/>
</dbReference>
<dbReference type="IntAct" id="O95721">
    <property type="interactions" value="172"/>
</dbReference>
<dbReference type="MINT" id="O95721"/>
<dbReference type="STRING" id="9606.ENSP00000215730"/>
<dbReference type="GlyCosmos" id="O95721">
    <property type="glycosylation" value="4 sites, 1 glycan"/>
</dbReference>
<dbReference type="GlyGen" id="O95721">
    <property type="glycosylation" value="5 sites, 1 N-linked glycan (1 site), 1 O-linked glycan (4 sites)"/>
</dbReference>
<dbReference type="iPTMnet" id="O95721"/>
<dbReference type="MetOSite" id="O95721"/>
<dbReference type="PhosphoSitePlus" id="O95721"/>
<dbReference type="BioMuta" id="SNAP29"/>
<dbReference type="jPOST" id="O95721"/>
<dbReference type="MassIVE" id="O95721"/>
<dbReference type="PaxDb" id="9606-ENSP00000215730"/>
<dbReference type="PeptideAtlas" id="O95721"/>
<dbReference type="ProteomicsDB" id="51014"/>
<dbReference type="Pumba" id="O95721"/>
<dbReference type="Antibodypedia" id="23352">
    <property type="antibodies" value="201 antibodies from 29 providers"/>
</dbReference>
<dbReference type="DNASU" id="9342"/>
<dbReference type="Ensembl" id="ENST00000215730.12">
    <property type="protein sequence ID" value="ENSP00000215730.6"/>
    <property type="gene ID" value="ENSG00000099940.12"/>
</dbReference>
<dbReference type="GeneID" id="9342"/>
<dbReference type="KEGG" id="hsa:9342"/>
<dbReference type="MANE-Select" id="ENST00000215730.12">
    <property type="protein sequence ID" value="ENSP00000215730.6"/>
    <property type="RefSeq nucleotide sequence ID" value="NM_004782.4"/>
    <property type="RefSeq protein sequence ID" value="NP_004773.1"/>
</dbReference>
<dbReference type="UCSC" id="uc011ahw.3">
    <property type="organism name" value="human"/>
</dbReference>
<dbReference type="AGR" id="HGNC:11133"/>
<dbReference type="CTD" id="9342"/>
<dbReference type="DisGeNET" id="9342"/>
<dbReference type="GeneCards" id="SNAP29"/>
<dbReference type="HGNC" id="HGNC:11133">
    <property type="gene designation" value="SNAP29"/>
</dbReference>
<dbReference type="HPA" id="ENSG00000099940">
    <property type="expression patterns" value="Low tissue specificity"/>
</dbReference>
<dbReference type="MalaCards" id="SNAP29"/>
<dbReference type="MIM" id="604202">
    <property type="type" value="gene"/>
</dbReference>
<dbReference type="MIM" id="609528">
    <property type="type" value="phenotype"/>
</dbReference>
<dbReference type="neXtProt" id="NX_O95721"/>
<dbReference type="OpenTargets" id="ENSG00000099940"/>
<dbReference type="Orphanet" id="66631">
    <property type="disease" value="CEDNIK syndrome"/>
</dbReference>
<dbReference type="PharmGKB" id="PA35981"/>
<dbReference type="VEuPathDB" id="HostDB:ENSG00000099940"/>
<dbReference type="eggNOG" id="KOG3065">
    <property type="taxonomic scope" value="Eukaryota"/>
</dbReference>
<dbReference type="GeneTree" id="ENSGT00950000182843"/>
<dbReference type="InParanoid" id="O95721"/>
<dbReference type="OMA" id="NLDEMCD"/>
<dbReference type="OrthoDB" id="18679at2759"/>
<dbReference type="PAN-GO" id="O95721">
    <property type="GO annotations" value="7 GO annotations based on evolutionary models"/>
</dbReference>
<dbReference type="PhylomeDB" id="O95721"/>
<dbReference type="TreeFam" id="TF320226"/>
<dbReference type="PathwayCommons" id="O95721"/>
<dbReference type="Reactome" id="R-HSA-6798695">
    <property type="pathway name" value="Neutrophil degranulation"/>
</dbReference>
<dbReference type="Reactome" id="R-HSA-6811438">
    <property type="pathway name" value="Intra-Golgi traffic"/>
</dbReference>
<dbReference type="SignaLink" id="O95721"/>
<dbReference type="SIGNOR" id="O95721"/>
<dbReference type="BioGRID-ORCS" id="9342">
    <property type="hits" value="64 hits in 1166 CRISPR screens"/>
</dbReference>
<dbReference type="ChiTaRS" id="SNAP29">
    <property type="organism name" value="human"/>
</dbReference>
<dbReference type="EvolutionaryTrace" id="O95721"/>
<dbReference type="GeneWiki" id="SNAP29"/>
<dbReference type="GenomeRNAi" id="9342"/>
<dbReference type="Pharos" id="O95721">
    <property type="development level" value="Tbio"/>
</dbReference>
<dbReference type="PRO" id="PR:O95721"/>
<dbReference type="Proteomes" id="UP000005640">
    <property type="component" value="Chromosome 22"/>
</dbReference>
<dbReference type="RNAct" id="O95721">
    <property type="molecule type" value="protein"/>
</dbReference>
<dbReference type="Bgee" id="ENSG00000099940">
    <property type="expression patterns" value="Expressed in left testis and 206 other cell types or tissues"/>
</dbReference>
<dbReference type="ExpressionAtlas" id="O95721">
    <property type="expression patterns" value="baseline and differential"/>
</dbReference>
<dbReference type="GO" id="GO:0005776">
    <property type="term" value="C:autophagosome"/>
    <property type="evidence" value="ECO:0000250"/>
    <property type="project" value="UniProtKB"/>
</dbReference>
<dbReference type="GO" id="GO:0000421">
    <property type="term" value="C:autophagosome membrane"/>
    <property type="evidence" value="ECO:0007669"/>
    <property type="project" value="UniProtKB-SubCell"/>
</dbReference>
<dbReference type="GO" id="GO:0035577">
    <property type="term" value="C:azurophil granule membrane"/>
    <property type="evidence" value="ECO:0000304"/>
    <property type="project" value="Reactome"/>
</dbReference>
<dbReference type="GO" id="GO:0005813">
    <property type="term" value="C:centrosome"/>
    <property type="evidence" value="ECO:0000314"/>
    <property type="project" value="HPA"/>
</dbReference>
<dbReference type="GO" id="GO:0020018">
    <property type="term" value="C:ciliary pocket membrane"/>
    <property type="evidence" value="ECO:0000314"/>
    <property type="project" value="UniProtKB"/>
</dbReference>
<dbReference type="GO" id="GO:0005737">
    <property type="term" value="C:cytoplasm"/>
    <property type="evidence" value="ECO:0000314"/>
    <property type="project" value="BHF-UCL"/>
</dbReference>
<dbReference type="GO" id="GO:0005829">
    <property type="term" value="C:cytosol"/>
    <property type="evidence" value="ECO:0000314"/>
    <property type="project" value="HPA"/>
</dbReference>
<dbReference type="GO" id="GO:0000139">
    <property type="term" value="C:Golgi membrane"/>
    <property type="evidence" value="ECO:0000304"/>
    <property type="project" value="Reactome"/>
</dbReference>
<dbReference type="GO" id="GO:0005739">
    <property type="term" value="C:mitochondrion"/>
    <property type="evidence" value="ECO:0006056"/>
    <property type="project" value="FlyBase"/>
</dbReference>
<dbReference type="GO" id="GO:0005886">
    <property type="term" value="C:plasma membrane"/>
    <property type="evidence" value="ECO:0000318"/>
    <property type="project" value="GO_Central"/>
</dbReference>
<dbReference type="GO" id="GO:0098793">
    <property type="term" value="C:presynapse"/>
    <property type="evidence" value="ECO:0007669"/>
    <property type="project" value="GOC"/>
</dbReference>
<dbReference type="GO" id="GO:0031201">
    <property type="term" value="C:SNARE complex"/>
    <property type="evidence" value="ECO:0000314"/>
    <property type="project" value="UniProtKB"/>
</dbReference>
<dbReference type="GO" id="GO:0005484">
    <property type="term" value="F:SNAP receptor activity"/>
    <property type="evidence" value="ECO:0000318"/>
    <property type="project" value="GO_Central"/>
</dbReference>
<dbReference type="GO" id="GO:0019905">
    <property type="term" value="F:syntaxin binding"/>
    <property type="evidence" value="ECO:0000318"/>
    <property type="project" value="GO_Central"/>
</dbReference>
<dbReference type="GO" id="GO:0097352">
    <property type="term" value="P:autophagosome maturation"/>
    <property type="evidence" value="ECO:0000315"/>
    <property type="project" value="UniProtKB"/>
</dbReference>
<dbReference type="GO" id="GO:0016240">
    <property type="term" value="P:autophagosome membrane docking"/>
    <property type="evidence" value="ECO:0000314"/>
    <property type="project" value="GO_Central"/>
</dbReference>
<dbReference type="GO" id="GO:0060271">
    <property type="term" value="P:cilium assembly"/>
    <property type="evidence" value="ECO:0000315"/>
    <property type="project" value="UniProtKB"/>
</dbReference>
<dbReference type="GO" id="GO:0006887">
    <property type="term" value="P:exocytosis"/>
    <property type="evidence" value="ECO:0000318"/>
    <property type="project" value="GO_Central"/>
</dbReference>
<dbReference type="GO" id="GO:0061025">
    <property type="term" value="P:membrane fusion"/>
    <property type="evidence" value="ECO:0000304"/>
    <property type="project" value="ProtInc"/>
</dbReference>
<dbReference type="GO" id="GO:0015031">
    <property type="term" value="P:protein transport"/>
    <property type="evidence" value="ECO:0007669"/>
    <property type="project" value="UniProtKB-KW"/>
</dbReference>
<dbReference type="GO" id="GO:0031629">
    <property type="term" value="P:synaptic vesicle fusion to presynaptic active zone membrane"/>
    <property type="evidence" value="ECO:0000318"/>
    <property type="project" value="GO_Central"/>
</dbReference>
<dbReference type="GO" id="GO:0016082">
    <property type="term" value="P:synaptic vesicle priming"/>
    <property type="evidence" value="ECO:0000318"/>
    <property type="project" value="GO_Central"/>
</dbReference>
<dbReference type="GO" id="GO:0006903">
    <property type="term" value="P:vesicle targeting"/>
    <property type="evidence" value="ECO:0000304"/>
    <property type="project" value="ProtInc"/>
</dbReference>
<dbReference type="CDD" id="cd15856">
    <property type="entry name" value="SNARE_SNAP29C"/>
    <property type="match status" value="1"/>
</dbReference>
<dbReference type="CDD" id="cd15887">
    <property type="entry name" value="SNARE_SNAP29N"/>
    <property type="match status" value="1"/>
</dbReference>
<dbReference type="FunFam" id="1.20.5.110:FF:000041">
    <property type="entry name" value="Synaptosomal-associated protein 29"/>
    <property type="match status" value="1"/>
</dbReference>
<dbReference type="FunFam" id="1.20.5.110:FF:000051">
    <property type="entry name" value="synaptosomal-associated protein 29"/>
    <property type="match status" value="1"/>
</dbReference>
<dbReference type="Gene3D" id="1.20.5.110">
    <property type="match status" value="2"/>
</dbReference>
<dbReference type="InterPro" id="IPR000727">
    <property type="entry name" value="T_SNARE_dom"/>
</dbReference>
<dbReference type="PANTHER" id="PTHR19305">
    <property type="entry name" value="SYNAPTOSOMAL ASSOCIATED PROTEIN"/>
    <property type="match status" value="1"/>
</dbReference>
<dbReference type="PANTHER" id="PTHR19305:SF9">
    <property type="entry name" value="SYNAPTOSOMAL-ASSOCIATED PROTEIN 29"/>
    <property type="match status" value="1"/>
</dbReference>
<dbReference type="SMART" id="SM00397">
    <property type="entry name" value="t_SNARE"/>
    <property type="match status" value="2"/>
</dbReference>
<dbReference type="SUPFAM" id="SSF58038">
    <property type="entry name" value="SNARE fusion complex"/>
    <property type="match status" value="2"/>
</dbReference>
<dbReference type="PROSITE" id="PS50192">
    <property type="entry name" value="T_SNARE"/>
    <property type="match status" value="1"/>
</dbReference>
<accession>O95721</accession>
<proteinExistence type="evidence at protein level"/>
<protein>
    <recommendedName>
        <fullName evidence="16">Synaptosomal-associated protein 29</fullName>
        <shortName evidence="16">SNAP-29</shortName>
    </recommendedName>
    <alternativeName>
        <fullName evidence="16">Soluble 29 kDa NSF attachment protein</fullName>
    </alternativeName>
    <alternativeName>
        <fullName>Vesicle-membrane fusion protein SNAP-29</fullName>
    </alternativeName>
</protein>
<gene>
    <name evidence="16" type="primary">SNAP29</name>
</gene>
<comment type="function">
    <text evidence="6 7 8">SNAREs, soluble N-ethylmaleimide-sensitive factor-attachment protein receptors, are essential proteins for fusion of cellular membranes. SNAREs localized on opposing membranes assemble to form a trans-SNARE complex, an extended, parallel four alpha-helical bundle that drives membrane fusion. SNAP29 is a SNARE involved in autophagy through the direct control of autophagosome membrane fusion with the lysososome membrane. Also plays a role in ciliogenesis by regulating membrane fusions.</text>
</comment>
<comment type="subunit">
    <text evidence="1 6 8 9 11 12 13">Forms a SNARE complex, composed of VAMP8, SNAP29 and STX17, involved in fusion of autophagosome with lysosome (PubMed:23217709, PubMed:25686604, PubMed:37821429). Interacts with multiple syntaxins including STX6 (By similarity). Interacts with EIPR1 (PubMed:27440922). Interacts with STX17; this interaction is increased in the absence of TMEM39A (PubMed:31806350, PubMed:33422265).</text>
</comment>
<comment type="subunit">
    <text evidence="10">(Microbial infection) Interacts with Hantaan hantavirus nucleoprotein; this interaction prevents the breakdown of the viral glycoprotein N by virus-triggered autophagy.</text>
</comment>
<comment type="subunit">
    <text evidence="12">(Microbial infection) The interaction with STX17 is decreased in presence of SARS coronavirus-2/SARS-CoV-2 ORF3A protein.</text>
</comment>
<comment type="interaction">
    <interactant intactId="EBI-490676">
        <id>O95721</id>
    </interactant>
    <interactant intactId="EBI-930964">
        <id>P54253</id>
        <label>ATXN1</label>
    </interactant>
    <organismsDiffer>false</organismsDiffer>
    <experiments>3</experiments>
</comment>
<comment type="interaction">
    <interactant intactId="EBI-490676">
        <id>O95721</id>
    </interactant>
    <interactant intactId="EBI-3866319">
        <id>Q9Y2V7</id>
        <label>COG6</label>
    </interactant>
    <organismsDiffer>false</organismsDiffer>
    <experiments>5</experiments>
</comment>
<comment type="interaction">
    <interactant intactId="EBI-490676">
        <id>O95721</id>
    </interactant>
    <interactant intactId="EBI-490691">
        <id>Q9H4M9</id>
        <label>EHD1</label>
    </interactant>
    <organismsDiffer>false</organismsDiffer>
    <experiments>4</experiments>
</comment>
<comment type="interaction">
    <interactant intactId="EBI-490676">
        <id>O95721</id>
    </interactant>
    <interactant intactId="EBI-10175124">
        <id>Q8IZU0</id>
        <label>FAM9B</label>
    </interactant>
    <organismsDiffer>false</organismsDiffer>
    <experiments>3</experiments>
</comment>
<comment type="interaction">
    <interactant intactId="EBI-490676">
        <id>O95721</id>
    </interactant>
    <interactant intactId="EBI-2870039">
        <id>Q8IZT9</id>
        <label>FAM9C</label>
    </interactant>
    <organismsDiffer>false</organismsDiffer>
    <experiments>5</experiments>
</comment>
<comment type="interaction">
    <interactant intactId="EBI-490676">
        <id>O95721</id>
    </interactant>
    <interactant intactId="EBI-466029">
        <id>P42858</id>
        <label>HTT</label>
    </interactant>
    <organismsDiffer>false</organismsDiffer>
    <experiments>3</experiments>
</comment>
<comment type="interaction">
    <interactant intactId="EBI-490676">
        <id>O95721</id>
    </interactant>
    <interactant intactId="EBI-3921185">
        <id>Q9H115</id>
        <label>NAPB</label>
    </interactant>
    <organismsDiffer>false</organismsDiffer>
    <experiments>8</experiments>
</comment>
<comment type="interaction">
    <interactant intactId="EBI-490676">
        <id>O95721</id>
    </interactant>
    <interactant intactId="EBI-741158">
        <id>Q96HA8</id>
        <label>NTAQ1</label>
    </interactant>
    <organismsDiffer>false</organismsDiffer>
    <experiments>3</experiments>
</comment>
<comment type="interaction">
    <interactant intactId="EBI-490676">
        <id>O95721</id>
    </interactant>
    <interactant intactId="EBI-539828">
        <id>O15294</id>
        <label>OGT</label>
    </interactant>
    <organismsDiffer>false</organismsDiffer>
    <experiments>2</experiments>
</comment>
<comment type="interaction">
    <interactant intactId="EBI-490676">
        <id>O95721</id>
    </interactant>
    <interactant intactId="EBI-929013">
        <id>Q02833</id>
        <label>RASSF7</label>
    </interactant>
    <organismsDiffer>false</organismsDiffer>
    <experiments>4</experiments>
</comment>
<comment type="interaction">
    <interactant intactId="EBI-490676">
        <id>O95721</id>
    </interactant>
    <interactant intactId="EBI-2691717">
        <id>Q86Y82</id>
        <label>STX12</label>
    </interactant>
    <organismsDiffer>false</organismsDiffer>
    <experiments>9</experiments>
</comment>
<comment type="interaction">
    <interactant intactId="EBI-490676">
        <id>O95721</id>
    </interactant>
    <interactant intactId="EBI-9089968">
        <id>O14662-5</id>
        <label>STX16</label>
    </interactant>
    <organismsDiffer>false</organismsDiffer>
    <experiments>3</experiments>
</comment>
<comment type="interaction">
    <interactant intactId="EBI-490676">
        <id>O95721</id>
    </interactant>
    <interactant intactId="EBI-2797775">
        <id>P56962</id>
        <label>STX17</label>
    </interactant>
    <organismsDiffer>false</organismsDiffer>
    <experiments>11</experiments>
</comment>
<comment type="interaction">
    <interactant intactId="EBI-490676">
        <id>O95721</id>
    </interactant>
    <interactant intactId="EBI-9071709">
        <id>P61266</id>
        <label>STX1B</label>
    </interactant>
    <organismsDiffer>false</organismsDiffer>
    <experiments>3</experiments>
</comment>
<comment type="interaction">
    <interactant intactId="EBI-490676">
        <id>O95721</id>
    </interactant>
    <interactant intactId="EBI-11956649">
        <id>P32856-2</id>
        <label>STX2</label>
    </interactant>
    <organismsDiffer>false</organismsDiffer>
    <experiments>3</experiments>
</comment>
<comment type="interaction">
    <interactant intactId="EBI-490676">
        <id>O95721</id>
    </interactant>
    <interactant intactId="EBI-1394295">
        <id>Q13277</id>
        <label>STX3</label>
    </interactant>
    <organismsDiffer>false</organismsDiffer>
    <experiments>4</experiments>
</comment>
<comment type="interaction">
    <interactant intactId="EBI-490676">
        <id>O95721</id>
    </interactant>
    <interactant intactId="EBI-2695795">
        <id>O43752</id>
        <label>STX6</label>
    </interactant>
    <organismsDiffer>false</organismsDiffer>
    <experiments>4</experiments>
</comment>
<comment type="interaction">
    <interactant intactId="EBI-490676">
        <id>O95721</id>
    </interactant>
    <interactant intactId="EBI-357631">
        <id>Q13114</id>
        <label>TRAF3</label>
    </interactant>
    <organismsDiffer>false</organismsDiffer>
    <experiments>6</experiments>
</comment>
<comment type="interaction">
    <interactant intactId="EBI-490676">
        <id>O95721</id>
    </interactant>
    <interactant intactId="EBI-12003468">
        <id>A0AVG3</id>
        <label>TSNARE1</label>
    </interactant>
    <organismsDiffer>false</organismsDiffer>
    <experiments>3</experiments>
</comment>
<comment type="interaction">
    <interactant intactId="EBI-490676">
        <id>O95721</id>
    </interactant>
    <interactant intactId="EBI-18122152">
        <id>Q6F5E7</id>
        <label>TXNRD3NB</label>
    </interactant>
    <organismsDiffer>false</organismsDiffer>
    <experiments>3</experiments>
</comment>
<comment type="interaction">
    <interactant intactId="EBI-490676">
        <id>O95721</id>
    </interactant>
    <interactant intactId="EBI-10201335">
        <id>P23763</id>
        <label>VAMP1</label>
    </interactant>
    <organismsDiffer>false</organismsDiffer>
    <experiments>3</experiments>
</comment>
<comment type="interaction">
    <interactant intactId="EBI-490676">
        <id>O95721</id>
    </interactant>
    <interactant intactId="EBI-520113">
        <id>P63027</id>
        <label>VAMP2</label>
    </interactant>
    <organismsDiffer>false</organismsDiffer>
    <experiments>4</experiments>
</comment>
<comment type="interaction">
    <interactant intactId="EBI-490676">
        <id>O95721</id>
    </interactant>
    <interactant intactId="EBI-722343">
        <id>Q15836</id>
        <label>VAMP3</label>
    </interactant>
    <organismsDiffer>false</organismsDiffer>
    <experiments>5</experiments>
</comment>
<comment type="interaction">
    <interactant intactId="EBI-490676">
        <id>O95721</id>
    </interactant>
    <interactant intactId="EBI-10187996">
        <id>O75379-2</id>
        <label>VAMP4</label>
    </interactant>
    <organismsDiffer>false</organismsDiffer>
    <experiments>3</experiments>
</comment>
<comment type="interaction">
    <interactant intactId="EBI-490676">
        <id>O95721</id>
    </interactant>
    <interactant intactId="EBI-10191195">
        <id>O95183</id>
        <label>VAMP5</label>
    </interactant>
    <organismsDiffer>false</organismsDiffer>
    <experiments>11</experiments>
</comment>
<comment type="interaction">
    <interactant intactId="EBI-490676">
        <id>O95721</id>
    </interactant>
    <interactant intactId="EBI-727028">
        <id>Q9BV40</id>
        <label>VAMP8</label>
    </interactant>
    <organismsDiffer>false</organismsDiffer>
    <experiments>8</experiments>
</comment>
<comment type="subcellular location">
    <subcellularLocation>
        <location evidence="6">Cytoplasm</location>
    </subcellularLocation>
    <subcellularLocation>
        <location evidence="1">Golgi apparatus membrane</location>
        <topology evidence="15">Peripheral membrane protein</topology>
    </subcellularLocation>
    <subcellularLocation>
        <location evidence="8">Cytoplasmic vesicle</location>
        <location evidence="8">Autophagosome membrane</location>
        <topology evidence="15">Peripheral membrane protein</topology>
    </subcellularLocation>
    <subcellularLocation>
        <location evidence="7">Cell projection</location>
        <location evidence="7">Cilium membrane</location>
        <topology evidence="15">Peripheral membrane protein</topology>
    </subcellularLocation>
    <text evidence="6 7">Appears to be mostly membrane-bound, probably via interaction with syntaxins, but a significant portion is cytoplasmic. Localizes to the ciliary pocket from where the cilium protrudes.</text>
</comment>
<comment type="tissue specificity">
    <text evidence="14">Found in brain, heart, kidney, liver, lung, placenta, skeletal muscle, spleen and pancreas.</text>
</comment>
<comment type="disease" evidence="5">
    <disease id="DI-00251">
        <name>Cerebral dysgenesis, neuropathy, ichthyosis, and palmoplantar keratoderma syndrome</name>
        <acronym>CEDNIK</acronym>
        <description>A neurocutaneous syndrome characterized by cerebral dysgenesis, neuropathy, ichthyosis and palmoplantar keratoderma.</description>
        <dbReference type="MIM" id="609528"/>
    </disease>
    <text>The disease is caused by variants affecting the gene represented in this entry.</text>
</comment>
<comment type="similarity">
    <text evidence="15">Belongs to the SNAP-25 family.</text>
</comment>
<sequence>MSAYPKSYNPFDDDGEDEGARPAPWRDARDLPDGPDAPADRQQYLRQEVLRRAEATAASTSRSLALMYESEKVGVASSEELARQRGVLERTEKMVDKMDQDLKISQKHINSIKSVFGGLVNYFKSKPVETPPEQNGTLTSQPNNRLKEAISTSKEQEAKYQASHPNLRKLDDTDPVPRGAGSAMSTDAYPKNPHLRAYHQKIDSNLDELSMGLGRLKDIALGMQTEIEEQDDILDRLTTKVDKLDVNIKSTERKVRQL</sequence>
<reference key="1">
    <citation type="journal article" date="1998" name="J. Biol. Chem.">
        <title>Three novel proteins of the syntaxin/SNAP-25 family.</title>
        <authorList>
            <person name="Steegmaier M."/>
            <person name="Yang B."/>
            <person name="Yoo J.-S."/>
            <person name="Huang B."/>
            <person name="Shen M."/>
            <person name="Yu S."/>
            <person name="Luo Y."/>
            <person name="Scheller R.H."/>
        </authorList>
    </citation>
    <scope>NUCLEOTIDE SEQUENCE [MRNA]</scope>
    <scope>TISSUE SPECIFICITY</scope>
    <source>
        <tissue>Brain</tissue>
    </source>
</reference>
<reference key="2">
    <citation type="submission" date="2000-06" db="EMBL/GenBank/DDBJ databases">
        <title>Genomic organization of the human SNAP29 gene.</title>
        <authorList>
            <person name="Schardt A."/>
            <person name="Kraemer E.-M."/>
            <person name="Werner H."/>
            <person name="Nave K.-A."/>
        </authorList>
    </citation>
    <scope>NUCLEOTIDE SEQUENCE [GENOMIC DNA]</scope>
</reference>
<reference key="3">
    <citation type="journal article" date="2004" name="Genome Biol.">
        <title>A genome annotation-driven approach to cloning the human ORFeome.</title>
        <authorList>
            <person name="Collins J.E."/>
            <person name="Wright C.L."/>
            <person name="Edwards C.A."/>
            <person name="Davis M.P."/>
            <person name="Grinham J.A."/>
            <person name="Cole C.G."/>
            <person name="Goward M.E."/>
            <person name="Aguado B."/>
            <person name="Mallya M."/>
            <person name="Mokrab Y."/>
            <person name="Huckle E.J."/>
            <person name="Beare D.M."/>
            <person name="Dunham I."/>
        </authorList>
    </citation>
    <scope>NUCLEOTIDE SEQUENCE [LARGE SCALE MRNA]</scope>
</reference>
<reference key="4">
    <citation type="submission" date="2003-05" db="EMBL/GenBank/DDBJ databases">
        <title>Cloning of human full-length CDSs in BD Creator(TM) system donor vector.</title>
        <authorList>
            <person name="Kalnine N."/>
            <person name="Chen X."/>
            <person name="Rolfs A."/>
            <person name="Halleck A."/>
            <person name="Hines L."/>
            <person name="Eisenstein S."/>
            <person name="Koundinya M."/>
            <person name="Raphael J."/>
            <person name="Moreira D."/>
            <person name="Kelley T."/>
            <person name="LaBaer J."/>
            <person name="Lin Y."/>
            <person name="Phelan M."/>
            <person name="Farmer A."/>
        </authorList>
    </citation>
    <scope>NUCLEOTIDE SEQUENCE [LARGE SCALE MRNA]</scope>
</reference>
<reference key="5">
    <citation type="journal article" date="2004" name="Genome Res.">
        <title>The status, quality, and expansion of the NIH full-length cDNA project: the Mammalian Gene Collection (MGC).</title>
        <authorList>
            <consortium name="The MGC Project Team"/>
        </authorList>
    </citation>
    <scope>NUCLEOTIDE SEQUENCE [LARGE SCALE MRNA]</scope>
    <source>
        <tissue>Pancreas</tissue>
    </source>
</reference>
<reference key="6">
    <citation type="journal article" date="2005" name="Am. J. Hum. Genet.">
        <title>A mutation in SNAP29, coding for a SNARE protein involved in intracellular trafficking, causes a novel neurocutaneous syndrome characterized by cerebral dysgenesis, neuropathy, ichthyosis, and palmoplantar keratoderma.</title>
        <authorList>
            <person name="Sprecher E."/>
            <person name="Ishida-Yamamoto A."/>
            <person name="Mizrahi-Koren M."/>
            <person name="Rapaport D."/>
            <person name="Goldsher D."/>
            <person name="Indelman M."/>
            <person name="Topaz O."/>
            <person name="Chefetz I."/>
            <person name="Keren H."/>
            <person name="O'brien T.J."/>
            <person name="Bercovich D."/>
            <person name="Shalev S."/>
            <person name="Geiger D."/>
            <person name="Bergman R."/>
            <person name="Horowitz M."/>
            <person name="Mandel H."/>
        </authorList>
    </citation>
    <scope>INVOLVEMENT IN CEDNIK</scope>
</reference>
<reference key="7">
    <citation type="journal article" date="2011" name="BMC Syst. Biol.">
        <title>Initial characterization of the human central proteome.</title>
        <authorList>
            <person name="Burkard T.R."/>
            <person name="Planyavsky M."/>
            <person name="Kaupe I."/>
            <person name="Breitwieser F.P."/>
            <person name="Buerckstuemmer T."/>
            <person name="Bennett K.L."/>
            <person name="Superti-Furga G."/>
            <person name="Colinge J."/>
        </authorList>
    </citation>
    <scope>IDENTIFICATION BY MASS SPECTROMETRY [LARGE SCALE ANALYSIS]</scope>
</reference>
<reference key="8">
    <citation type="journal article" date="2012" name="Cell">
        <title>The hairpin-type tail-anchored SNARE syntaxin 17 targets to autophagosomes for fusion with endosomes/lysosomes.</title>
        <authorList>
            <person name="Itakura E."/>
            <person name="Kishi-Itakura C."/>
            <person name="Mizushima N."/>
        </authorList>
    </citation>
    <scope>FUNCTION IN AUTOPHAGY</scope>
    <scope>INTERACTION WITH VAMP8 AND STX17</scope>
</reference>
<reference key="9">
    <citation type="journal article" date="2013" name="J. Proteome Res.">
        <title>Toward a comprehensive characterization of a human cancer cell phosphoproteome.</title>
        <authorList>
            <person name="Zhou H."/>
            <person name="Di Palma S."/>
            <person name="Preisinger C."/>
            <person name="Peng M."/>
            <person name="Polat A.N."/>
            <person name="Heck A.J."/>
            <person name="Mohammed S."/>
        </authorList>
    </citation>
    <scope>PHOSPHORYLATION [LARGE SCALE ANALYSIS] AT SER-77; SER-78; SER-114; THR-130; THR-137; SER-163; SER-182; SER-185; SER-204 AND SER-210</scope>
    <scope>IDENTIFICATION BY MASS SPECTROMETRY [LARGE SCALE ANALYSIS]</scope>
    <source>
        <tissue>Erythroleukemia</tissue>
    </source>
</reference>
<reference key="10">
    <citation type="journal article" date="2014" name="J. Proteomics">
        <title>An enzyme assisted RP-RPLC approach for in-depth analysis of human liver phosphoproteome.</title>
        <authorList>
            <person name="Bian Y."/>
            <person name="Song C."/>
            <person name="Cheng K."/>
            <person name="Dong M."/>
            <person name="Wang F."/>
            <person name="Huang J."/>
            <person name="Sun D."/>
            <person name="Wang L."/>
            <person name="Ye M."/>
            <person name="Zou H."/>
        </authorList>
    </citation>
    <scope>PHOSPHORYLATION [LARGE SCALE ANALYSIS] AT SER-114</scope>
    <scope>IDENTIFICATION BY MASS SPECTROMETRY [LARGE SCALE ANALYSIS]</scope>
    <source>
        <tissue>Liver</tissue>
    </source>
</reference>
<reference key="11">
    <citation type="journal article" date="2015" name="Nat. Cell Biol.">
        <title>Early steps in primary cilium assembly require EHD1/EHD3-dependent ciliary vesicle formation.</title>
        <authorList>
            <person name="Lu Q."/>
            <person name="Insinna C."/>
            <person name="Ott C."/>
            <person name="Stauffer J."/>
            <person name="Pintado P.A."/>
            <person name="Rahajeng J."/>
            <person name="Baxa U."/>
            <person name="Walia V."/>
            <person name="Cuenca A."/>
            <person name="Hwang Y.S."/>
            <person name="Daar I.O."/>
            <person name="Lopes S."/>
            <person name="Lippincott-Schwartz J."/>
            <person name="Jackson P.K."/>
            <person name="Caplan S."/>
            <person name="Westlake C.J."/>
        </authorList>
    </citation>
    <scope>FUNCTION</scope>
    <scope>SUBCELLULAR LOCATION</scope>
</reference>
<reference key="12">
    <citation type="journal article" date="2015" name="Proteomics">
        <title>N-terminome analysis of the human mitochondrial proteome.</title>
        <authorList>
            <person name="Vaca Jacome A.S."/>
            <person name="Rabilloud T."/>
            <person name="Schaeffer-Reiss C."/>
            <person name="Rompais M."/>
            <person name="Ayoub D."/>
            <person name="Lane L."/>
            <person name="Bairoch A."/>
            <person name="Van Dorsselaer A."/>
            <person name="Carapito C."/>
        </authorList>
    </citation>
    <scope>IDENTIFICATION BY MASS SPECTROMETRY [LARGE SCALE ANALYSIS]</scope>
</reference>
<reference key="13">
    <citation type="journal article" date="2019" name="Mol. Cell">
        <title>The ER-Localized Transmembrane Protein TMEM39A/SUSR2 Regulates Autophagy by Controlling the Trafficking of the PtdIns(4)P Phosphatase SAC1.</title>
        <authorList>
            <person name="Miao G."/>
            <person name="Zhang Y."/>
            <person name="Chen D."/>
            <person name="Zhang H."/>
        </authorList>
    </citation>
    <scope>INTERACTION WITH STX17</scope>
</reference>
<reference key="14">
    <citation type="journal article" date="2019" name="Cell Rep.">
        <title>The Glycoprotein and Nucleocapsid Protein of Hantaviruses Manipulate Autophagy Flux to Restrain Host Innate Immune Responses.</title>
        <authorList>
            <person name="Wang K."/>
            <person name="Ma H."/>
            <person name="Liu H."/>
            <person name="Ye W."/>
            <person name="Li Z."/>
            <person name="Cheng L."/>
            <person name="Zhang L."/>
            <person name="Lei Y."/>
            <person name="Shen L."/>
            <person name="Zhang F."/>
        </authorList>
    </citation>
    <scope>INTERACTION WITH HANTAAN HANTAVIRUS NUCLEOPROTEIN (MICROBIAL INFECTION)</scope>
</reference>
<reference key="15">
    <citation type="journal article" date="2016" name="Mol. Biol. Cell">
        <title>TSSC1 is novel component of the endosomal retrieval machinery.</title>
        <authorList>
            <person name="Gershlick D.C."/>
            <person name="Schindler C."/>
            <person name="Chen Y."/>
            <person name="Bonifacino J.S."/>
        </authorList>
    </citation>
    <scope>INTERACTION WITH EIPR1</scope>
</reference>
<reference key="16">
    <citation type="journal article" date="2020" name="Dev. Cell">
        <title>ORF3a of the COVID-19 virus SARS-CoV-2 blocks HOPS complex-mediated assembly of the SNARE complex required for autolysosome formation.</title>
        <authorList>
            <person name="Miao G."/>
            <person name="Zhao H."/>
            <person name="Li Y."/>
            <person name="Ji M."/>
            <person name="Chen Y."/>
            <person name="Shi Y."/>
            <person name="Bi Y."/>
            <person name="Wang P."/>
            <person name="Zhang H."/>
        </authorList>
    </citation>
    <scope>INTERACTION WITH STX17 (MICROBIAL INFECTION)</scope>
</reference>
<reference key="17">
    <citation type="journal article" date="2023" name="Nat. Commun.">
        <title>C9orf72-catalyzed GTP loading of Rab39A enables HOPS-mediated membrane tethering and fusion in mammalian autophagy.</title>
        <authorList>
            <person name="Zhang S."/>
            <person name="Tong M."/>
            <person name="Zheng D."/>
            <person name="Huang H."/>
            <person name="Li L."/>
            <person name="Ungermann C."/>
            <person name="Pan Y."/>
            <person name="Luo H."/>
            <person name="Lei M."/>
            <person name="Tang Z."/>
            <person name="Fu W."/>
            <person name="Chen S."/>
            <person name="Liu X."/>
            <person name="Zhong Q."/>
        </authorList>
    </citation>
    <scope>INTERACTION WITH STX17 AND VAMP8</scope>
</reference>
<reference key="18">
    <citation type="journal article" date="2015" name="Nature">
        <title>ATG14 promotes membrane tethering and fusion of autophagosomes to endolysosomes.</title>
        <authorList>
            <person name="Diao J."/>
            <person name="Liu R."/>
            <person name="Rong Y."/>
            <person name="Zhao M."/>
            <person name="Zhang J."/>
            <person name="Lai Y."/>
            <person name="Zhou Q."/>
            <person name="Wilz L.M."/>
            <person name="Li J."/>
            <person name="Vivona S."/>
            <person name="Pfuetzner R.A."/>
            <person name="Brunger A.T."/>
            <person name="Zhong Q."/>
        </authorList>
    </citation>
    <scope>X-RAY CRYSTALLOGRAPHY (1.4 ANGSTROMS) OF 39-116 AND 194-258 IN COMPLEX WITH STX17 AND VAMP8</scope>
    <scope>SUBCELLULAR LOCATION</scope>
    <scope>FUNCTION</scope>
</reference>
<organism>
    <name type="scientific">Homo sapiens</name>
    <name type="common">Human</name>
    <dbReference type="NCBI Taxonomy" id="9606"/>
    <lineage>
        <taxon>Eukaryota</taxon>
        <taxon>Metazoa</taxon>
        <taxon>Chordata</taxon>
        <taxon>Craniata</taxon>
        <taxon>Vertebrata</taxon>
        <taxon>Euteleostomi</taxon>
        <taxon>Mammalia</taxon>
        <taxon>Eutheria</taxon>
        <taxon>Euarchontoglires</taxon>
        <taxon>Primates</taxon>
        <taxon>Haplorrhini</taxon>
        <taxon>Catarrhini</taxon>
        <taxon>Hominidae</taxon>
        <taxon>Homo</taxon>
    </lineage>
</organism>
<keyword id="KW-0002">3D-structure</keyword>
<keyword id="KW-0072">Autophagy</keyword>
<keyword id="KW-1003">Cell membrane</keyword>
<keyword id="KW-0966">Cell projection</keyword>
<keyword id="KW-0969">Cilium</keyword>
<keyword id="KW-0970">Cilium biogenesis/degradation</keyword>
<keyword id="KW-0175">Coiled coil</keyword>
<keyword id="KW-0963">Cytoplasm</keyword>
<keyword id="KW-0968">Cytoplasmic vesicle</keyword>
<keyword id="KW-0333">Golgi apparatus</keyword>
<keyword id="KW-0977">Ichthyosis</keyword>
<keyword id="KW-0472">Membrane</keyword>
<keyword id="KW-0622">Neuropathy</keyword>
<keyword id="KW-1007">Palmoplantar keratoderma</keyword>
<keyword id="KW-0597">Phosphoprotein</keyword>
<keyword id="KW-0653">Protein transport</keyword>
<keyword id="KW-1267">Proteomics identification</keyword>
<keyword id="KW-1185">Reference proteome</keyword>
<keyword id="KW-0813">Transport</keyword>
<name>SNP29_HUMAN</name>
<feature type="chain" id="PRO_0000213601" description="Synaptosomal-associated protein 29">
    <location>
        <begin position="1"/>
        <end position="258"/>
    </location>
</feature>
<feature type="domain" description="t-SNARE coiled-coil homology" evidence="3">
    <location>
        <begin position="196"/>
        <end position="258"/>
    </location>
</feature>
<feature type="region of interest" description="Disordered" evidence="4">
    <location>
        <begin position="1"/>
        <end position="41"/>
    </location>
</feature>
<feature type="region of interest" description="Disordered" evidence="4">
    <location>
        <begin position="150"/>
        <end position="191"/>
    </location>
</feature>
<feature type="coiled-coil region" evidence="2">
    <location>
        <begin position="76"/>
        <end position="107"/>
    </location>
</feature>
<feature type="compositionally biased region" description="Basic and acidic residues" evidence="4">
    <location>
        <begin position="18"/>
        <end position="32"/>
    </location>
</feature>
<feature type="modified residue" description="Phosphoserine" evidence="17">
    <location>
        <position position="77"/>
    </location>
</feature>
<feature type="modified residue" description="Phosphoserine" evidence="17">
    <location>
        <position position="78"/>
    </location>
</feature>
<feature type="modified residue" description="Phosphoserine" evidence="17 18">
    <location>
        <position position="114"/>
    </location>
</feature>
<feature type="modified residue" description="Phosphothreonine" evidence="17">
    <location>
        <position position="130"/>
    </location>
</feature>
<feature type="modified residue" description="Phosphothreonine" evidence="17">
    <location>
        <position position="137"/>
    </location>
</feature>
<feature type="modified residue" description="Phosphoserine" evidence="17">
    <location>
        <position position="163"/>
    </location>
</feature>
<feature type="modified residue" description="Phosphoserine" evidence="17">
    <location>
        <position position="182"/>
    </location>
</feature>
<feature type="modified residue" description="Phosphoserine" evidence="17">
    <location>
        <position position="185"/>
    </location>
</feature>
<feature type="modified residue" description="Phosphoserine" evidence="17">
    <location>
        <position position="204"/>
    </location>
</feature>
<feature type="modified residue" description="Phosphoserine" evidence="17">
    <location>
        <position position="210"/>
    </location>
</feature>
<feature type="helix" evidence="19">
    <location>
        <begin position="40"/>
        <end position="113"/>
    </location>
</feature>
<feature type="helix" evidence="19">
    <location>
        <begin position="195"/>
        <end position="255"/>
    </location>
</feature>
<evidence type="ECO:0000250" key="1">
    <source>
        <dbReference type="UniProtKB" id="Q9Z2P6"/>
    </source>
</evidence>
<evidence type="ECO:0000255" key="2"/>
<evidence type="ECO:0000255" key="3">
    <source>
        <dbReference type="PROSITE-ProRule" id="PRU00202"/>
    </source>
</evidence>
<evidence type="ECO:0000256" key="4">
    <source>
        <dbReference type="SAM" id="MobiDB-lite"/>
    </source>
</evidence>
<evidence type="ECO:0000269" key="5">
    <source>
    </source>
</evidence>
<evidence type="ECO:0000269" key="6">
    <source>
    </source>
</evidence>
<evidence type="ECO:0000269" key="7">
    <source>
    </source>
</evidence>
<evidence type="ECO:0000269" key="8">
    <source>
    </source>
</evidence>
<evidence type="ECO:0000269" key="9">
    <source>
    </source>
</evidence>
<evidence type="ECO:0000269" key="10">
    <source>
    </source>
</evidence>
<evidence type="ECO:0000269" key="11">
    <source>
    </source>
</evidence>
<evidence type="ECO:0000269" key="12">
    <source>
    </source>
</evidence>
<evidence type="ECO:0000269" key="13">
    <source>
    </source>
</evidence>
<evidence type="ECO:0000269" key="14">
    <source>
    </source>
</evidence>
<evidence type="ECO:0000305" key="15"/>
<evidence type="ECO:0000312" key="16">
    <source>
        <dbReference type="HGNC" id="HGNC:11133"/>
    </source>
</evidence>
<evidence type="ECO:0007744" key="17">
    <source>
    </source>
</evidence>
<evidence type="ECO:0007744" key="18">
    <source>
    </source>
</evidence>
<evidence type="ECO:0007829" key="19">
    <source>
        <dbReference type="PDB" id="4WY4"/>
    </source>
</evidence>